<feature type="chain" id="PRO_0000231427" description="Deoxyuridine 5'-triphosphate nucleotidohydrolase">
    <location>
        <begin position="1"/>
        <end position="151"/>
    </location>
</feature>
<feature type="binding site" evidence="1">
    <location>
        <begin position="70"/>
        <end position="72"/>
    </location>
    <ligand>
        <name>substrate</name>
    </ligand>
</feature>
<feature type="binding site" evidence="1">
    <location>
        <position position="83"/>
    </location>
    <ligand>
        <name>substrate</name>
    </ligand>
</feature>
<feature type="binding site" evidence="1">
    <location>
        <begin position="87"/>
        <end position="89"/>
    </location>
    <ligand>
        <name>substrate</name>
    </ligand>
</feature>
<feature type="binding site" evidence="1">
    <location>
        <position position="97"/>
    </location>
    <ligand>
        <name>substrate</name>
    </ligand>
</feature>
<gene>
    <name evidence="1" type="primary">dut</name>
    <name type="ordered locus">SPA3583</name>
</gene>
<protein>
    <recommendedName>
        <fullName evidence="1">Deoxyuridine 5'-triphosphate nucleotidohydrolase</fullName>
        <shortName evidence="1">dUTPase</shortName>
        <ecNumber evidence="1">3.6.1.23</ecNumber>
    </recommendedName>
    <alternativeName>
        <fullName evidence="1">dUTP pyrophosphatase</fullName>
    </alternativeName>
</protein>
<evidence type="ECO:0000255" key="1">
    <source>
        <dbReference type="HAMAP-Rule" id="MF_00116"/>
    </source>
</evidence>
<dbReference type="EC" id="3.6.1.23" evidence="1"/>
<dbReference type="EMBL" id="CP000026">
    <property type="protein sequence ID" value="AAV79384.1"/>
    <property type="molecule type" value="Genomic_DNA"/>
</dbReference>
<dbReference type="SMR" id="Q5PC28"/>
<dbReference type="KEGG" id="spt:SPA3583"/>
<dbReference type="HOGENOM" id="CLU_068508_1_1_6"/>
<dbReference type="UniPathway" id="UPA00610">
    <property type="reaction ID" value="UER00666"/>
</dbReference>
<dbReference type="Proteomes" id="UP000008185">
    <property type="component" value="Chromosome"/>
</dbReference>
<dbReference type="GO" id="GO:0004170">
    <property type="term" value="F:dUTP diphosphatase activity"/>
    <property type="evidence" value="ECO:0007669"/>
    <property type="project" value="UniProtKB-UniRule"/>
</dbReference>
<dbReference type="GO" id="GO:0000287">
    <property type="term" value="F:magnesium ion binding"/>
    <property type="evidence" value="ECO:0007669"/>
    <property type="project" value="UniProtKB-UniRule"/>
</dbReference>
<dbReference type="GO" id="GO:0006226">
    <property type="term" value="P:dUMP biosynthetic process"/>
    <property type="evidence" value="ECO:0007669"/>
    <property type="project" value="UniProtKB-UniRule"/>
</dbReference>
<dbReference type="GO" id="GO:0046081">
    <property type="term" value="P:dUTP catabolic process"/>
    <property type="evidence" value="ECO:0007669"/>
    <property type="project" value="InterPro"/>
</dbReference>
<dbReference type="CDD" id="cd07557">
    <property type="entry name" value="trimeric_dUTPase"/>
    <property type="match status" value="1"/>
</dbReference>
<dbReference type="FunFam" id="2.70.40.10:FF:000002">
    <property type="entry name" value="dUTP diphosphatase"/>
    <property type="match status" value="1"/>
</dbReference>
<dbReference type="Gene3D" id="2.70.40.10">
    <property type="match status" value="1"/>
</dbReference>
<dbReference type="HAMAP" id="MF_00116">
    <property type="entry name" value="dUTPase_bact"/>
    <property type="match status" value="1"/>
</dbReference>
<dbReference type="InterPro" id="IPR008181">
    <property type="entry name" value="dUTPase"/>
</dbReference>
<dbReference type="InterPro" id="IPR029054">
    <property type="entry name" value="dUTPase-like"/>
</dbReference>
<dbReference type="InterPro" id="IPR036157">
    <property type="entry name" value="dUTPase-like_sf"/>
</dbReference>
<dbReference type="InterPro" id="IPR033704">
    <property type="entry name" value="dUTPase_trimeric"/>
</dbReference>
<dbReference type="NCBIfam" id="TIGR00576">
    <property type="entry name" value="dut"/>
    <property type="match status" value="1"/>
</dbReference>
<dbReference type="NCBIfam" id="NF001862">
    <property type="entry name" value="PRK00601.1"/>
    <property type="match status" value="1"/>
</dbReference>
<dbReference type="PANTHER" id="PTHR11241">
    <property type="entry name" value="DEOXYURIDINE 5'-TRIPHOSPHATE NUCLEOTIDOHYDROLASE"/>
    <property type="match status" value="1"/>
</dbReference>
<dbReference type="PANTHER" id="PTHR11241:SF0">
    <property type="entry name" value="DEOXYURIDINE 5'-TRIPHOSPHATE NUCLEOTIDOHYDROLASE"/>
    <property type="match status" value="1"/>
</dbReference>
<dbReference type="Pfam" id="PF00692">
    <property type="entry name" value="dUTPase"/>
    <property type="match status" value="1"/>
</dbReference>
<dbReference type="SUPFAM" id="SSF51283">
    <property type="entry name" value="dUTPase-like"/>
    <property type="match status" value="1"/>
</dbReference>
<reference key="1">
    <citation type="journal article" date="2004" name="Nat. Genet.">
        <title>Comparison of genome degradation in Paratyphi A and Typhi, human-restricted serovars of Salmonella enterica that cause typhoid.</title>
        <authorList>
            <person name="McClelland M."/>
            <person name="Sanderson K.E."/>
            <person name="Clifton S.W."/>
            <person name="Latreille P."/>
            <person name="Porwollik S."/>
            <person name="Sabo A."/>
            <person name="Meyer R."/>
            <person name="Bieri T."/>
            <person name="Ozersky P."/>
            <person name="McLellan M."/>
            <person name="Harkins C.R."/>
            <person name="Wang C."/>
            <person name="Nguyen C."/>
            <person name="Berghoff A."/>
            <person name="Elliott G."/>
            <person name="Kohlberg S."/>
            <person name="Strong C."/>
            <person name="Du F."/>
            <person name="Carter J."/>
            <person name="Kremizki C."/>
            <person name="Layman D."/>
            <person name="Leonard S."/>
            <person name="Sun H."/>
            <person name="Fulton L."/>
            <person name="Nash W."/>
            <person name="Miner T."/>
            <person name="Minx P."/>
            <person name="Delehaunty K."/>
            <person name="Fronick C."/>
            <person name="Magrini V."/>
            <person name="Nhan M."/>
            <person name="Warren W."/>
            <person name="Florea L."/>
            <person name="Spieth J."/>
            <person name="Wilson R.K."/>
        </authorList>
    </citation>
    <scope>NUCLEOTIDE SEQUENCE [LARGE SCALE GENOMIC DNA]</scope>
    <source>
        <strain>ATCC 9150 / SARB42</strain>
    </source>
</reference>
<name>DUT_SALPA</name>
<keyword id="KW-0378">Hydrolase</keyword>
<keyword id="KW-0460">Magnesium</keyword>
<keyword id="KW-0479">Metal-binding</keyword>
<keyword id="KW-0546">Nucleotide metabolism</keyword>
<accession>Q5PC28</accession>
<comment type="function">
    <text evidence="1">This enzyme is involved in nucleotide metabolism: it produces dUMP, the immediate precursor of thymidine nucleotides and it decreases the intracellular concentration of dUTP so that uracil cannot be incorporated into DNA.</text>
</comment>
<comment type="catalytic activity">
    <reaction evidence="1">
        <text>dUTP + H2O = dUMP + diphosphate + H(+)</text>
        <dbReference type="Rhea" id="RHEA:10248"/>
        <dbReference type="ChEBI" id="CHEBI:15377"/>
        <dbReference type="ChEBI" id="CHEBI:15378"/>
        <dbReference type="ChEBI" id="CHEBI:33019"/>
        <dbReference type="ChEBI" id="CHEBI:61555"/>
        <dbReference type="ChEBI" id="CHEBI:246422"/>
        <dbReference type="EC" id="3.6.1.23"/>
    </reaction>
</comment>
<comment type="cofactor">
    <cofactor evidence="1">
        <name>Mg(2+)</name>
        <dbReference type="ChEBI" id="CHEBI:18420"/>
    </cofactor>
</comment>
<comment type="pathway">
    <text evidence="1">Pyrimidine metabolism; dUMP biosynthesis; dUMP from dCTP (dUTP route): step 2/2.</text>
</comment>
<comment type="similarity">
    <text evidence="1">Belongs to the dUTPase family.</text>
</comment>
<proteinExistence type="inferred from homology"/>
<sequence length="151" mass="16036">MKKIDVKILDPRVGQQFPLPTYATSGSAGLDLRACLDDAVELAPGATTLVPTGLAIHIADPSLAAVMLPRSGLGHKHGIVLGNLVGLIDSDYQGQLMVSIWNRGQDSFTIEPGERIAQMVFVPVVQAEFNLVEAFDATERGEGGFGHSGRK</sequence>
<organism>
    <name type="scientific">Salmonella paratyphi A (strain ATCC 9150 / SARB42)</name>
    <dbReference type="NCBI Taxonomy" id="295319"/>
    <lineage>
        <taxon>Bacteria</taxon>
        <taxon>Pseudomonadati</taxon>
        <taxon>Pseudomonadota</taxon>
        <taxon>Gammaproteobacteria</taxon>
        <taxon>Enterobacterales</taxon>
        <taxon>Enterobacteriaceae</taxon>
        <taxon>Salmonella</taxon>
    </lineage>
</organism>